<proteinExistence type="inferred from homology"/>
<feature type="chain" id="PRO_0000215147" description="Glucokinase">
    <location>
        <begin position="1"/>
        <end position="324"/>
    </location>
</feature>
<feature type="binding site" evidence="1">
    <location>
        <begin position="6"/>
        <end position="11"/>
    </location>
    <ligand>
        <name>ATP</name>
        <dbReference type="ChEBI" id="CHEBI:30616"/>
    </ligand>
</feature>
<feature type="sequence conflict" description="In Ref. 1 and 2." evidence="2" ref="1 2">
    <original>A</original>
    <variation>R</variation>
    <location>
        <position position="258"/>
    </location>
</feature>
<feature type="sequence conflict" description="In Ref. 1 and 2." evidence="2" ref="1 2">
    <original>AAAYANKYSEVE</original>
    <variation>QLPMPTNILKLNNIF</variation>
    <location>
        <begin position="313"/>
        <end position="324"/>
    </location>
</feature>
<gene>
    <name evidence="1" type="primary">glk</name>
    <name type="ordered locus">ZMO0369</name>
</gene>
<accession>P21908</accession>
<accession>Q5NQL1</accession>
<organism>
    <name type="scientific">Zymomonas mobilis subsp. mobilis (strain ATCC 31821 / ZM4 / CP4)</name>
    <dbReference type="NCBI Taxonomy" id="264203"/>
    <lineage>
        <taxon>Bacteria</taxon>
        <taxon>Pseudomonadati</taxon>
        <taxon>Pseudomonadota</taxon>
        <taxon>Alphaproteobacteria</taxon>
        <taxon>Sphingomonadales</taxon>
        <taxon>Zymomonadaceae</taxon>
        <taxon>Zymomonas</taxon>
    </lineage>
</organism>
<sequence length="324" mass="34897">MEIVAIDIGGTHARFSIAEVSNGRVLSLGEETTFKTAEHASLQLAWERFGEKLGRPLPRAAAIAWAGPVHGEVLKLTNNPWVLRPATLNEKLDIDTHVLINDFGAVAHAVAHMDSSYLDHICGPDEALPSDGVITILGPGTGLGVAHLLRTEGRYFVIETEGGHIDFAPLDRLEDKILARLRERFRRVSIERIISGPGLGNIYEALAAIEGVPFSLLDDIKLWQMALEGKDNLAEAALDRFCLSLGAIAGDLALAQGATSVVIGGGVGLRIASHLPESGFRQRFVSKGRFERVMSKIPVKLITYPQPGLLGAAAAYANKYSEVE</sequence>
<name>GLK_ZYMMO</name>
<comment type="catalytic activity">
    <reaction evidence="1">
        <text>D-glucose + ATP = D-glucose 6-phosphate + ADP + H(+)</text>
        <dbReference type="Rhea" id="RHEA:17825"/>
        <dbReference type="ChEBI" id="CHEBI:4167"/>
        <dbReference type="ChEBI" id="CHEBI:15378"/>
        <dbReference type="ChEBI" id="CHEBI:30616"/>
        <dbReference type="ChEBI" id="CHEBI:61548"/>
        <dbReference type="ChEBI" id="CHEBI:456216"/>
        <dbReference type="EC" id="2.7.1.2"/>
    </reaction>
</comment>
<comment type="subcellular location">
    <subcellularLocation>
        <location evidence="1">Cytoplasm</location>
    </subcellularLocation>
</comment>
<comment type="similarity">
    <text evidence="1">Belongs to the bacterial glucokinase family.</text>
</comment>
<evidence type="ECO:0000255" key="1">
    <source>
        <dbReference type="HAMAP-Rule" id="MF_00524"/>
    </source>
</evidence>
<evidence type="ECO:0000305" key="2"/>
<keyword id="KW-0067">ATP-binding</keyword>
<keyword id="KW-0963">Cytoplasm</keyword>
<keyword id="KW-0324">Glycolysis</keyword>
<keyword id="KW-0418">Kinase</keyword>
<keyword id="KW-0547">Nucleotide-binding</keyword>
<keyword id="KW-1185">Reference proteome</keyword>
<keyword id="KW-0808">Transferase</keyword>
<dbReference type="EC" id="2.7.1.2" evidence="1"/>
<dbReference type="EMBL" id="M60615">
    <property type="protein sequence ID" value="AAA27694.1"/>
    <property type="molecule type" value="Genomic_DNA"/>
</dbReference>
<dbReference type="EMBL" id="AF313764">
    <property type="protein sequence ID" value="AAG29867.1"/>
    <property type="molecule type" value="Genomic_DNA"/>
</dbReference>
<dbReference type="EMBL" id="AE008692">
    <property type="protein sequence ID" value="AAV88993.1"/>
    <property type="molecule type" value="Genomic_DNA"/>
</dbReference>
<dbReference type="PIR" id="D37855">
    <property type="entry name" value="D37855"/>
</dbReference>
<dbReference type="SMR" id="P21908"/>
<dbReference type="STRING" id="264203.ZMO0369"/>
<dbReference type="KEGG" id="zmo:ZMO0369"/>
<dbReference type="eggNOG" id="COG0837">
    <property type="taxonomic scope" value="Bacteria"/>
</dbReference>
<dbReference type="HOGENOM" id="CLU_042582_1_0_5"/>
<dbReference type="Proteomes" id="UP000001173">
    <property type="component" value="Chromosome"/>
</dbReference>
<dbReference type="GO" id="GO:0005829">
    <property type="term" value="C:cytosol"/>
    <property type="evidence" value="ECO:0007669"/>
    <property type="project" value="TreeGrafter"/>
</dbReference>
<dbReference type="GO" id="GO:0005524">
    <property type="term" value="F:ATP binding"/>
    <property type="evidence" value="ECO:0007669"/>
    <property type="project" value="UniProtKB-UniRule"/>
</dbReference>
<dbReference type="GO" id="GO:0005536">
    <property type="term" value="F:D-glucose binding"/>
    <property type="evidence" value="ECO:0007669"/>
    <property type="project" value="InterPro"/>
</dbReference>
<dbReference type="GO" id="GO:0004340">
    <property type="term" value="F:glucokinase activity"/>
    <property type="evidence" value="ECO:0007669"/>
    <property type="project" value="UniProtKB-UniRule"/>
</dbReference>
<dbReference type="GO" id="GO:0006096">
    <property type="term" value="P:glycolytic process"/>
    <property type="evidence" value="ECO:0007669"/>
    <property type="project" value="UniProtKB-UniRule"/>
</dbReference>
<dbReference type="CDD" id="cd24008">
    <property type="entry name" value="ASKHA_NBD_GLK"/>
    <property type="match status" value="1"/>
</dbReference>
<dbReference type="Gene3D" id="3.30.420.40">
    <property type="match status" value="1"/>
</dbReference>
<dbReference type="Gene3D" id="3.40.367.20">
    <property type="match status" value="1"/>
</dbReference>
<dbReference type="HAMAP" id="MF_00524">
    <property type="entry name" value="Glucokinase"/>
    <property type="match status" value="1"/>
</dbReference>
<dbReference type="InterPro" id="IPR043129">
    <property type="entry name" value="ATPase_NBD"/>
</dbReference>
<dbReference type="InterPro" id="IPR050201">
    <property type="entry name" value="Bacterial_glucokinase"/>
</dbReference>
<dbReference type="InterPro" id="IPR003836">
    <property type="entry name" value="Glucokinase"/>
</dbReference>
<dbReference type="NCBIfam" id="TIGR00749">
    <property type="entry name" value="glk"/>
    <property type="match status" value="1"/>
</dbReference>
<dbReference type="NCBIfam" id="NF009073">
    <property type="entry name" value="PRK12408.1"/>
    <property type="match status" value="1"/>
</dbReference>
<dbReference type="PANTHER" id="PTHR47690">
    <property type="entry name" value="GLUCOKINASE"/>
    <property type="match status" value="1"/>
</dbReference>
<dbReference type="PANTHER" id="PTHR47690:SF1">
    <property type="entry name" value="GLUCOKINASE"/>
    <property type="match status" value="1"/>
</dbReference>
<dbReference type="Pfam" id="PF02685">
    <property type="entry name" value="Glucokinase"/>
    <property type="match status" value="1"/>
</dbReference>
<dbReference type="SUPFAM" id="SSF53067">
    <property type="entry name" value="Actin-like ATPase domain"/>
    <property type="match status" value="1"/>
</dbReference>
<reference key="1">
    <citation type="journal article" date="1990" name="J. Bacteriol.">
        <title>Sequence and genetic organization of a Zymomonas mobilis gene cluster that encodes several enzymes of glucose metabolism.</title>
        <authorList>
            <person name="Barnell W.O."/>
            <person name="Yi K.C."/>
            <person name="Conway T."/>
        </authorList>
    </citation>
    <scope>NUCLEOTIDE SEQUENCE [GENOMIC DNA]</scope>
    <source>
        <strain>ATCC 31821 / ZM4 / CP4</strain>
    </source>
</reference>
<reference key="2">
    <citation type="submission" date="2000-10" db="EMBL/GenBank/DDBJ databases">
        <authorList>
            <person name="Ahn J.Y."/>
            <person name="Kang H.S."/>
        </authorList>
    </citation>
    <scope>NUCLEOTIDE SEQUENCE [GENOMIC DNA]</scope>
    <source>
        <strain>ATCC 31821 / ZM4 / CP4</strain>
    </source>
</reference>
<reference key="3">
    <citation type="journal article" date="2005" name="Nat. Biotechnol.">
        <title>The genome sequence of the ethanologenic bacterium Zymomonas mobilis ZM4.</title>
        <authorList>
            <person name="Seo J.-S."/>
            <person name="Chong H."/>
            <person name="Park H.S."/>
            <person name="Yoon K.-O."/>
            <person name="Jung C."/>
            <person name="Kim J.J."/>
            <person name="Hong J.H."/>
            <person name="Kim H."/>
            <person name="Kim J.-H."/>
            <person name="Kil J.-I."/>
            <person name="Park C.J."/>
            <person name="Oh H.-M."/>
            <person name="Lee J.-S."/>
            <person name="Jin S.-J."/>
            <person name="Um H.-W."/>
            <person name="Lee H.-J."/>
            <person name="Oh S.-J."/>
            <person name="Kim J.Y."/>
            <person name="Kang H.L."/>
            <person name="Lee S.Y."/>
            <person name="Lee K.J."/>
            <person name="Kang H.S."/>
        </authorList>
    </citation>
    <scope>NUCLEOTIDE SEQUENCE [LARGE SCALE GENOMIC DNA]</scope>
    <source>
        <strain>ATCC 31821 / ZM4 / CP4</strain>
    </source>
</reference>
<protein>
    <recommendedName>
        <fullName evidence="1">Glucokinase</fullName>
        <ecNumber evidence="1">2.7.1.2</ecNumber>
    </recommendedName>
    <alternativeName>
        <fullName evidence="1">Glucose kinase</fullName>
    </alternativeName>
</protein>